<comment type="function">
    <text evidence="1">Involved in the gluconeogenesis. Catalyzes the conversion of oxaloacetate (OAA) to phosphoenolpyruvate (PEP) through direct phosphoryl transfer between the nucleoside triphosphate and OAA.</text>
</comment>
<comment type="catalytic activity">
    <reaction evidence="1">
        <text>oxaloacetate + ATP = phosphoenolpyruvate + ADP + CO2</text>
        <dbReference type="Rhea" id="RHEA:18617"/>
        <dbReference type="ChEBI" id="CHEBI:16452"/>
        <dbReference type="ChEBI" id="CHEBI:16526"/>
        <dbReference type="ChEBI" id="CHEBI:30616"/>
        <dbReference type="ChEBI" id="CHEBI:58702"/>
        <dbReference type="ChEBI" id="CHEBI:456216"/>
        <dbReference type="EC" id="4.1.1.49"/>
    </reaction>
</comment>
<comment type="cofactor">
    <cofactor evidence="1">
        <name>Mn(2+)</name>
        <dbReference type="ChEBI" id="CHEBI:29035"/>
    </cofactor>
    <text evidence="1">Binds 1 Mn(2+) ion per subunit.</text>
</comment>
<comment type="pathway">
    <text evidence="1">Carbohydrate biosynthesis; gluconeogenesis.</text>
</comment>
<comment type="subcellular location">
    <subcellularLocation>
        <location evidence="1">Cytoplasm</location>
    </subcellularLocation>
</comment>
<comment type="similarity">
    <text evidence="1">Belongs to the phosphoenolpyruvate carboxykinase (ATP) family.</text>
</comment>
<gene>
    <name evidence="1" type="primary">pckA</name>
    <name type="ordered locus">EUBREC_2002</name>
</gene>
<feature type="chain" id="PRO_1000206238" description="Phosphoenolpyruvate carboxykinase (ATP)">
    <location>
        <begin position="1"/>
        <end position="534"/>
    </location>
</feature>
<feature type="binding site" evidence="1">
    <location>
        <position position="59"/>
    </location>
    <ligand>
        <name>substrate</name>
    </ligand>
</feature>
<feature type="binding site" evidence="1">
    <location>
        <position position="200"/>
    </location>
    <ligand>
        <name>substrate</name>
    </ligand>
</feature>
<feature type="binding site" evidence="1">
    <location>
        <position position="206"/>
    </location>
    <ligand>
        <name>ATP</name>
        <dbReference type="ChEBI" id="CHEBI:30616"/>
    </ligand>
</feature>
<feature type="binding site" evidence="1">
    <location>
        <position position="206"/>
    </location>
    <ligand>
        <name>Mn(2+)</name>
        <dbReference type="ChEBI" id="CHEBI:29035"/>
    </ligand>
</feature>
<feature type="binding site" evidence="1">
    <location>
        <position position="206"/>
    </location>
    <ligand>
        <name>substrate</name>
    </ligand>
</feature>
<feature type="binding site" evidence="1">
    <location>
        <position position="225"/>
    </location>
    <ligand>
        <name>ATP</name>
        <dbReference type="ChEBI" id="CHEBI:30616"/>
    </ligand>
</feature>
<feature type="binding site" evidence="1">
    <location>
        <position position="225"/>
    </location>
    <ligand>
        <name>Mn(2+)</name>
        <dbReference type="ChEBI" id="CHEBI:29035"/>
    </ligand>
</feature>
<feature type="binding site" evidence="1">
    <location>
        <begin position="242"/>
        <end position="250"/>
    </location>
    <ligand>
        <name>ATP</name>
        <dbReference type="ChEBI" id="CHEBI:30616"/>
    </ligand>
</feature>
<feature type="binding site" evidence="1">
    <location>
        <position position="263"/>
    </location>
    <ligand>
        <name>Mn(2+)</name>
        <dbReference type="ChEBI" id="CHEBI:29035"/>
    </ligand>
</feature>
<feature type="binding site" evidence="1">
    <location>
        <position position="291"/>
    </location>
    <ligand>
        <name>ATP</name>
        <dbReference type="ChEBI" id="CHEBI:30616"/>
    </ligand>
</feature>
<feature type="binding site" evidence="1">
    <location>
        <position position="327"/>
    </location>
    <ligand>
        <name>ATP</name>
        <dbReference type="ChEBI" id="CHEBI:30616"/>
    </ligand>
</feature>
<feature type="binding site" evidence="1">
    <location>
        <position position="327"/>
    </location>
    <ligand>
        <name>substrate</name>
    </ligand>
</feature>
<feature type="binding site" evidence="1">
    <location>
        <begin position="443"/>
        <end position="444"/>
    </location>
    <ligand>
        <name>ATP</name>
        <dbReference type="ChEBI" id="CHEBI:30616"/>
    </ligand>
</feature>
<feature type="binding site" evidence="1">
    <location>
        <position position="449"/>
    </location>
    <ligand>
        <name>ATP</name>
        <dbReference type="ChEBI" id="CHEBI:30616"/>
    </ligand>
</feature>
<protein>
    <recommendedName>
        <fullName evidence="1">Phosphoenolpyruvate carboxykinase (ATP)</fullName>
        <shortName evidence="1">PCK</shortName>
        <shortName evidence="1">PEP carboxykinase</shortName>
        <shortName evidence="1">PEPCK</shortName>
        <ecNumber evidence="1">4.1.1.49</ecNumber>
    </recommendedName>
</protein>
<proteinExistence type="inferred from homology"/>
<dbReference type="EC" id="4.1.1.49" evidence="1"/>
<dbReference type="EMBL" id="CP001107">
    <property type="protein sequence ID" value="ACR75743.1"/>
    <property type="molecule type" value="Genomic_DNA"/>
</dbReference>
<dbReference type="RefSeq" id="WP_012742840.1">
    <property type="nucleotide sequence ID" value="NZ_CAXSYD010000002.1"/>
</dbReference>
<dbReference type="SMR" id="C4ZBL1"/>
<dbReference type="STRING" id="515619.EUBREC_2002"/>
<dbReference type="PaxDb" id="515619-EUBREC_2002"/>
<dbReference type="GeneID" id="86988789"/>
<dbReference type="KEGG" id="ere:EUBREC_2002"/>
<dbReference type="HOGENOM" id="CLU_018247_0_1_9"/>
<dbReference type="UniPathway" id="UPA00138"/>
<dbReference type="Proteomes" id="UP000001477">
    <property type="component" value="Chromosome"/>
</dbReference>
<dbReference type="GO" id="GO:0005829">
    <property type="term" value="C:cytosol"/>
    <property type="evidence" value="ECO:0007669"/>
    <property type="project" value="TreeGrafter"/>
</dbReference>
<dbReference type="GO" id="GO:0005524">
    <property type="term" value="F:ATP binding"/>
    <property type="evidence" value="ECO:0007669"/>
    <property type="project" value="UniProtKB-UniRule"/>
</dbReference>
<dbReference type="GO" id="GO:0046872">
    <property type="term" value="F:metal ion binding"/>
    <property type="evidence" value="ECO:0007669"/>
    <property type="project" value="UniProtKB-KW"/>
</dbReference>
<dbReference type="GO" id="GO:0004612">
    <property type="term" value="F:phosphoenolpyruvate carboxykinase (ATP) activity"/>
    <property type="evidence" value="ECO:0007669"/>
    <property type="project" value="UniProtKB-UniRule"/>
</dbReference>
<dbReference type="GO" id="GO:0006094">
    <property type="term" value="P:gluconeogenesis"/>
    <property type="evidence" value="ECO:0007669"/>
    <property type="project" value="UniProtKB-UniRule"/>
</dbReference>
<dbReference type="CDD" id="cd00484">
    <property type="entry name" value="PEPCK_ATP"/>
    <property type="match status" value="1"/>
</dbReference>
<dbReference type="FunFam" id="2.170.8.10:FF:000001">
    <property type="entry name" value="Phosphoenolpyruvate carboxykinase (ATP)"/>
    <property type="match status" value="1"/>
</dbReference>
<dbReference type="FunFam" id="3.40.449.10:FF:000001">
    <property type="entry name" value="Phosphoenolpyruvate carboxykinase (ATP)"/>
    <property type="match status" value="1"/>
</dbReference>
<dbReference type="Gene3D" id="3.90.228.20">
    <property type="match status" value="1"/>
</dbReference>
<dbReference type="Gene3D" id="3.40.449.10">
    <property type="entry name" value="Phosphoenolpyruvate Carboxykinase, domain 1"/>
    <property type="match status" value="1"/>
</dbReference>
<dbReference type="Gene3D" id="2.170.8.10">
    <property type="entry name" value="Phosphoenolpyruvate Carboxykinase, domain 2"/>
    <property type="match status" value="1"/>
</dbReference>
<dbReference type="HAMAP" id="MF_00453">
    <property type="entry name" value="PEPCK_ATP"/>
    <property type="match status" value="1"/>
</dbReference>
<dbReference type="InterPro" id="IPR001272">
    <property type="entry name" value="PEP_carboxykinase_ATP"/>
</dbReference>
<dbReference type="InterPro" id="IPR013035">
    <property type="entry name" value="PEP_carboxykinase_C"/>
</dbReference>
<dbReference type="InterPro" id="IPR008210">
    <property type="entry name" value="PEP_carboxykinase_N"/>
</dbReference>
<dbReference type="InterPro" id="IPR015994">
    <property type="entry name" value="PEPCK_ATP_CS"/>
</dbReference>
<dbReference type="NCBIfam" id="TIGR00224">
    <property type="entry name" value="pckA"/>
    <property type="match status" value="1"/>
</dbReference>
<dbReference type="NCBIfam" id="NF006819">
    <property type="entry name" value="PRK09344.1-1"/>
    <property type="match status" value="1"/>
</dbReference>
<dbReference type="NCBIfam" id="NF006820">
    <property type="entry name" value="PRK09344.1-2"/>
    <property type="match status" value="1"/>
</dbReference>
<dbReference type="NCBIfam" id="NF006821">
    <property type="entry name" value="PRK09344.1-3"/>
    <property type="match status" value="1"/>
</dbReference>
<dbReference type="PANTHER" id="PTHR30031:SF0">
    <property type="entry name" value="PHOSPHOENOLPYRUVATE CARBOXYKINASE (ATP)"/>
    <property type="match status" value="1"/>
</dbReference>
<dbReference type="PANTHER" id="PTHR30031">
    <property type="entry name" value="PHOSPHOENOLPYRUVATE CARBOXYKINASE ATP"/>
    <property type="match status" value="1"/>
</dbReference>
<dbReference type="Pfam" id="PF01293">
    <property type="entry name" value="PEPCK_ATP"/>
    <property type="match status" value="1"/>
</dbReference>
<dbReference type="PIRSF" id="PIRSF006294">
    <property type="entry name" value="PEP_crbxkin"/>
    <property type="match status" value="1"/>
</dbReference>
<dbReference type="SUPFAM" id="SSF68923">
    <property type="entry name" value="PEP carboxykinase N-terminal domain"/>
    <property type="match status" value="1"/>
</dbReference>
<dbReference type="SUPFAM" id="SSF53795">
    <property type="entry name" value="PEP carboxykinase-like"/>
    <property type="match status" value="1"/>
</dbReference>
<dbReference type="PROSITE" id="PS00532">
    <property type="entry name" value="PEPCK_ATP"/>
    <property type="match status" value="1"/>
</dbReference>
<keyword id="KW-0067">ATP-binding</keyword>
<keyword id="KW-0963">Cytoplasm</keyword>
<keyword id="KW-0210">Decarboxylase</keyword>
<keyword id="KW-0312">Gluconeogenesis</keyword>
<keyword id="KW-0456">Lyase</keyword>
<keyword id="KW-0464">Manganese</keyword>
<keyword id="KW-0479">Metal-binding</keyword>
<keyword id="KW-0547">Nucleotide-binding</keyword>
<sequence length="534" mass="59053">MANVDLTKYGITGTTEIVHNPSYETLFEEETKAGLEGYEVGKETELGAVNVMTGIYTGRSPKDKYIVMDENSKDTVWWNTPEYPNDNHPMKEDVWATVKDLAKKELCNKKLFVVDAFCGANKDTRMAVRFIVEVAWQAHFVTNMFIQPSAEELENFEPDFVVYNASKAKVENYKELGLNSETCVAFNITSKEQVIINTWYGGEMKKGMFSMMNYYLPLKGIASMHCSANADMNGENTAIFFGLSGTGKTTLSTDPKRLLIGDDEHGWDDNGVFNFEGGCYAKVIGLDKESEPDIYNAIRRDALLENVTVADDGKIDFEDKSVTENTRVSYPINHITNIVKPVSSAPAAKNVIFLSADAFGVLPPVSILTPEQTQYYFLSGFTAKLAGTERGITEPTPTFSACFGQAFLELHPTKYAAELVKKMEKSGAKAYLVNTGWNGTGKRITIKDTRGIIDAILSGDILNAPTKKIPMFDFEVPTELPGVDSGILDPRDTYADASEWEAKAKDLAERFNKNFVKYTTNEAGKALVAAGPQL</sequence>
<organism>
    <name type="scientific">Agathobacter rectalis (strain ATCC 33656 / DSM 3377 / JCM 17463 / KCTC 5835 / VPI 0990)</name>
    <name type="common">Eubacterium rectale</name>
    <dbReference type="NCBI Taxonomy" id="515619"/>
    <lineage>
        <taxon>Bacteria</taxon>
        <taxon>Bacillati</taxon>
        <taxon>Bacillota</taxon>
        <taxon>Clostridia</taxon>
        <taxon>Lachnospirales</taxon>
        <taxon>Lachnospiraceae</taxon>
        <taxon>Agathobacter</taxon>
    </lineage>
</organism>
<evidence type="ECO:0000255" key="1">
    <source>
        <dbReference type="HAMAP-Rule" id="MF_00453"/>
    </source>
</evidence>
<name>PCKA_AGARV</name>
<reference key="1">
    <citation type="journal article" date="2009" name="Proc. Natl. Acad. Sci. U.S.A.">
        <title>Characterizing a model human gut microbiota composed of members of its two dominant bacterial phyla.</title>
        <authorList>
            <person name="Mahowald M.A."/>
            <person name="Rey F.E."/>
            <person name="Seedorf H."/>
            <person name="Turnbaugh P.J."/>
            <person name="Fulton R.S."/>
            <person name="Wollam A."/>
            <person name="Shah N."/>
            <person name="Wang C."/>
            <person name="Magrini V."/>
            <person name="Wilson R.K."/>
            <person name="Cantarel B.L."/>
            <person name="Coutinho P.M."/>
            <person name="Henrissat B."/>
            <person name="Crock L.W."/>
            <person name="Russell A."/>
            <person name="Verberkmoes N.C."/>
            <person name="Hettich R.L."/>
            <person name="Gordon J.I."/>
        </authorList>
    </citation>
    <scope>NUCLEOTIDE SEQUENCE [LARGE SCALE GENOMIC DNA]</scope>
    <source>
        <strain>ATCC 33656 / DSM 3377 / JCM 17463 / KCTC 5835 / LMG 30912 / VPI 0990</strain>
    </source>
</reference>
<accession>C4ZBL1</accession>